<name>RSMH_EHRCR</name>
<keyword id="KW-0963">Cytoplasm</keyword>
<keyword id="KW-0489">Methyltransferase</keyword>
<keyword id="KW-1185">Reference proteome</keyword>
<keyword id="KW-0698">rRNA processing</keyword>
<keyword id="KW-0949">S-adenosyl-L-methionine</keyword>
<keyword id="KW-0808">Transferase</keyword>
<proteinExistence type="inferred from homology"/>
<gene>
    <name evidence="1" type="primary">rsmH</name>
    <name type="synonym">mraW</name>
    <name type="ordered locus">ECH_0542</name>
</gene>
<feature type="chain" id="PRO_1000062826" description="Ribosomal RNA small subunit methyltransferase H">
    <location>
        <begin position="1"/>
        <end position="297"/>
    </location>
</feature>
<feature type="binding site" evidence="1">
    <location>
        <begin position="30"/>
        <end position="32"/>
    </location>
    <ligand>
        <name>S-adenosyl-L-methionine</name>
        <dbReference type="ChEBI" id="CHEBI:59789"/>
    </ligand>
</feature>
<feature type="binding site" evidence="1">
    <location>
        <position position="48"/>
    </location>
    <ligand>
        <name>S-adenosyl-L-methionine</name>
        <dbReference type="ChEBI" id="CHEBI:59789"/>
    </ligand>
</feature>
<feature type="binding site" evidence="1">
    <location>
        <position position="75"/>
    </location>
    <ligand>
        <name>S-adenosyl-L-methionine</name>
        <dbReference type="ChEBI" id="CHEBI:59789"/>
    </ligand>
</feature>
<feature type="binding site" evidence="1">
    <location>
        <position position="96"/>
    </location>
    <ligand>
        <name>S-adenosyl-L-methionine</name>
        <dbReference type="ChEBI" id="CHEBI:59789"/>
    </ligand>
</feature>
<feature type="binding site" evidence="1">
    <location>
        <position position="103"/>
    </location>
    <ligand>
        <name>S-adenosyl-L-methionine</name>
        <dbReference type="ChEBI" id="CHEBI:59789"/>
    </ligand>
</feature>
<organism>
    <name type="scientific">Ehrlichia chaffeensis (strain ATCC CRL-10679 / Arkansas)</name>
    <dbReference type="NCBI Taxonomy" id="205920"/>
    <lineage>
        <taxon>Bacteria</taxon>
        <taxon>Pseudomonadati</taxon>
        <taxon>Pseudomonadota</taxon>
        <taxon>Alphaproteobacteria</taxon>
        <taxon>Rickettsiales</taxon>
        <taxon>Anaplasmataceae</taxon>
        <taxon>Ehrlichia</taxon>
    </lineage>
</organism>
<protein>
    <recommendedName>
        <fullName evidence="1">Ribosomal RNA small subunit methyltransferase H</fullName>
        <ecNumber evidence="1">2.1.1.199</ecNumber>
    </recommendedName>
    <alternativeName>
        <fullName evidence="1">16S rRNA m(4)C1402 methyltransferase</fullName>
    </alternativeName>
    <alternativeName>
        <fullName evidence="1">rRNA (cytosine-N(4)-)-methyltransferase RsmH</fullName>
    </alternativeName>
</protein>
<sequence>MHTPVLLNEMLDILNPQDGKVYVDATFGAGGYTRAILKSANCQVYAIDQDECTNVFYEKLVNDFPGKVHFCVSKFSKIKQILHGAQLKKVDGIVFDIGVSSMQLEDASRGFSFSKDGPLDMRMSTSISNVDASVFVNTAFEEEIANVIYQYGGEKYSRKIAKAIAESRKKKPIKTTGELASIVRSVISRSKNHSIDPATRTFQAIRIWVNKELEELEQGIIDSADLLNPGGKIIVVSFHSLEDRIVKVMFKSLCSGSSVISPIGFQLINKKVIRPSFEEILNNPRSRSAKLRAILKI</sequence>
<accession>Q2GGS8</accession>
<reference key="1">
    <citation type="journal article" date="2006" name="PLoS Genet.">
        <title>Comparative genomics of emerging human ehrlichiosis agents.</title>
        <authorList>
            <person name="Dunning Hotopp J.C."/>
            <person name="Lin M."/>
            <person name="Madupu R."/>
            <person name="Crabtree J."/>
            <person name="Angiuoli S.V."/>
            <person name="Eisen J.A."/>
            <person name="Seshadri R."/>
            <person name="Ren Q."/>
            <person name="Wu M."/>
            <person name="Utterback T.R."/>
            <person name="Smith S."/>
            <person name="Lewis M."/>
            <person name="Khouri H."/>
            <person name="Zhang C."/>
            <person name="Niu H."/>
            <person name="Lin Q."/>
            <person name="Ohashi N."/>
            <person name="Zhi N."/>
            <person name="Nelson W.C."/>
            <person name="Brinkac L.M."/>
            <person name="Dodson R.J."/>
            <person name="Rosovitz M.J."/>
            <person name="Sundaram J.P."/>
            <person name="Daugherty S.C."/>
            <person name="Davidsen T."/>
            <person name="Durkin A.S."/>
            <person name="Gwinn M.L."/>
            <person name="Haft D.H."/>
            <person name="Selengut J.D."/>
            <person name="Sullivan S.A."/>
            <person name="Zafar N."/>
            <person name="Zhou L."/>
            <person name="Benahmed F."/>
            <person name="Forberger H."/>
            <person name="Halpin R."/>
            <person name="Mulligan S."/>
            <person name="Robinson J."/>
            <person name="White O."/>
            <person name="Rikihisa Y."/>
            <person name="Tettelin H."/>
        </authorList>
    </citation>
    <scope>NUCLEOTIDE SEQUENCE [LARGE SCALE GENOMIC DNA]</scope>
    <source>
        <strain>ATCC CRL-10679 / Arkansas</strain>
    </source>
</reference>
<evidence type="ECO:0000255" key="1">
    <source>
        <dbReference type="HAMAP-Rule" id="MF_01007"/>
    </source>
</evidence>
<comment type="function">
    <text evidence="1">Specifically methylates the N4 position of cytidine in position 1402 (C1402) of 16S rRNA.</text>
</comment>
<comment type="catalytic activity">
    <reaction evidence="1">
        <text>cytidine(1402) in 16S rRNA + S-adenosyl-L-methionine = N(4)-methylcytidine(1402) in 16S rRNA + S-adenosyl-L-homocysteine + H(+)</text>
        <dbReference type="Rhea" id="RHEA:42928"/>
        <dbReference type="Rhea" id="RHEA-COMP:10286"/>
        <dbReference type="Rhea" id="RHEA-COMP:10287"/>
        <dbReference type="ChEBI" id="CHEBI:15378"/>
        <dbReference type="ChEBI" id="CHEBI:57856"/>
        <dbReference type="ChEBI" id="CHEBI:59789"/>
        <dbReference type="ChEBI" id="CHEBI:74506"/>
        <dbReference type="ChEBI" id="CHEBI:82748"/>
        <dbReference type="EC" id="2.1.1.199"/>
    </reaction>
</comment>
<comment type="subcellular location">
    <subcellularLocation>
        <location evidence="1">Cytoplasm</location>
    </subcellularLocation>
</comment>
<comment type="similarity">
    <text evidence="1">Belongs to the methyltransferase superfamily. RsmH family.</text>
</comment>
<dbReference type="EC" id="2.1.1.199" evidence="1"/>
<dbReference type="EMBL" id="CP000236">
    <property type="protein sequence ID" value="ABD44511.1"/>
    <property type="molecule type" value="Genomic_DNA"/>
</dbReference>
<dbReference type="RefSeq" id="WP_011452667.1">
    <property type="nucleotide sequence ID" value="NC_007799.1"/>
</dbReference>
<dbReference type="SMR" id="Q2GGS8"/>
<dbReference type="STRING" id="205920.ECH_0542"/>
<dbReference type="KEGG" id="ech:ECH_0542"/>
<dbReference type="eggNOG" id="COG0275">
    <property type="taxonomic scope" value="Bacteria"/>
</dbReference>
<dbReference type="HOGENOM" id="CLU_038422_1_1_5"/>
<dbReference type="OrthoDB" id="9806637at2"/>
<dbReference type="Proteomes" id="UP000008320">
    <property type="component" value="Chromosome"/>
</dbReference>
<dbReference type="GO" id="GO:0005737">
    <property type="term" value="C:cytoplasm"/>
    <property type="evidence" value="ECO:0007669"/>
    <property type="project" value="UniProtKB-SubCell"/>
</dbReference>
<dbReference type="GO" id="GO:0071424">
    <property type="term" value="F:rRNA (cytosine-N4-)-methyltransferase activity"/>
    <property type="evidence" value="ECO:0007669"/>
    <property type="project" value="UniProtKB-UniRule"/>
</dbReference>
<dbReference type="GO" id="GO:0070475">
    <property type="term" value="P:rRNA base methylation"/>
    <property type="evidence" value="ECO:0007669"/>
    <property type="project" value="UniProtKB-UniRule"/>
</dbReference>
<dbReference type="CDD" id="cd02440">
    <property type="entry name" value="AdoMet_MTases"/>
    <property type="match status" value="1"/>
</dbReference>
<dbReference type="Gene3D" id="1.10.150.170">
    <property type="entry name" value="Putative methyltransferase TM0872, insert domain"/>
    <property type="match status" value="1"/>
</dbReference>
<dbReference type="Gene3D" id="3.40.50.150">
    <property type="entry name" value="Vaccinia Virus protein VP39"/>
    <property type="match status" value="1"/>
</dbReference>
<dbReference type="HAMAP" id="MF_01007">
    <property type="entry name" value="16SrRNA_methyltr_H"/>
    <property type="match status" value="1"/>
</dbReference>
<dbReference type="InterPro" id="IPR002903">
    <property type="entry name" value="RsmH"/>
</dbReference>
<dbReference type="InterPro" id="IPR023397">
    <property type="entry name" value="SAM-dep_MeTrfase_MraW_recog"/>
</dbReference>
<dbReference type="InterPro" id="IPR029063">
    <property type="entry name" value="SAM-dependent_MTases_sf"/>
</dbReference>
<dbReference type="NCBIfam" id="TIGR00006">
    <property type="entry name" value="16S rRNA (cytosine(1402)-N(4))-methyltransferase RsmH"/>
    <property type="match status" value="1"/>
</dbReference>
<dbReference type="PANTHER" id="PTHR11265:SF0">
    <property type="entry name" value="12S RRNA N4-METHYLCYTIDINE METHYLTRANSFERASE"/>
    <property type="match status" value="1"/>
</dbReference>
<dbReference type="PANTHER" id="PTHR11265">
    <property type="entry name" value="S-ADENOSYL-METHYLTRANSFERASE MRAW"/>
    <property type="match status" value="1"/>
</dbReference>
<dbReference type="Pfam" id="PF01795">
    <property type="entry name" value="Methyltransf_5"/>
    <property type="match status" value="1"/>
</dbReference>
<dbReference type="PIRSF" id="PIRSF004486">
    <property type="entry name" value="MraW"/>
    <property type="match status" value="1"/>
</dbReference>
<dbReference type="SUPFAM" id="SSF81799">
    <property type="entry name" value="Putative methyltransferase TM0872, insert domain"/>
    <property type="match status" value="1"/>
</dbReference>
<dbReference type="SUPFAM" id="SSF53335">
    <property type="entry name" value="S-adenosyl-L-methionine-dependent methyltransferases"/>
    <property type="match status" value="1"/>
</dbReference>